<dbReference type="EC" id="2.1.1.144" evidence="1"/>
<dbReference type="EMBL" id="CP000301">
    <property type="protein sequence ID" value="ABD87690.1"/>
    <property type="molecule type" value="Genomic_DNA"/>
</dbReference>
<dbReference type="SMR" id="Q216J6"/>
<dbReference type="STRING" id="316056.RPC_2136"/>
<dbReference type="KEGG" id="rpc:RPC_2136"/>
<dbReference type="eggNOG" id="COG4106">
    <property type="taxonomic scope" value="Bacteria"/>
</dbReference>
<dbReference type="HOGENOM" id="CLU_037990_5_2_5"/>
<dbReference type="OrthoDB" id="9795085at2"/>
<dbReference type="GO" id="GO:0005737">
    <property type="term" value="C:cytoplasm"/>
    <property type="evidence" value="ECO:0007669"/>
    <property type="project" value="UniProtKB-SubCell"/>
</dbReference>
<dbReference type="GO" id="GO:0030798">
    <property type="term" value="F:trans-aconitate 2-methyltransferase activity"/>
    <property type="evidence" value="ECO:0007669"/>
    <property type="project" value="UniProtKB-UniRule"/>
</dbReference>
<dbReference type="GO" id="GO:0032259">
    <property type="term" value="P:methylation"/>
    <property type="evidence" value="ECO:0007669"/>
    <property type="project" value="UniProtKB-KW"/>
</dbReference>
<dbReference type="CDD" id="cd02440">
    <property type="entry name" value="AdoMet_MTases"/>
    <property type="match status" value="1"/>
</dbReference>
<dbReference type="Gene3D" id="1.10.150.290">
    <property type="entry name" value="S-adenosyl-L-methionine-dependent methyltransferases"/>
    <property type="match status" value="1"/>
</dbReference>
<dbReference type="Gene3D" id="3.40.50.150">
    <property type="entry name" value="Vaccinia Virus protein VP39"/>
    <property type="match status" value="1"/>
</dbReference>
<dbReference type="HAMAP" id="MF_00560">
    <property type="entry name" value="Tran_acon_Me_trans"/>
    <property type="match status" value="1"/>
</dbReference>
<dbReference type="InterPro" id="IPR041698">
    <property type="entry name" value="Methyltransf_25"/>
</dbReference>
<dbReference type="InterPro" id="IPR029063">
    <property type="entry name" value="SAM-dependent_MTases_sf"/>
</dbReference>
<dbReference type="InterPro" id="IPR023506">
    <property type="entry name" value="Trans-aconitate_MeTrfase"/>
</dbReference>
<dbReference type="InterPro" id="IPR023149">
    <property type="entry name" value="Trans_acon_MeTrfase_C"/>
</dbReference>
<dbReference type="NCBIfam" id="NF002463">
    <property type="entry name" value="PRK01683.1"/>
    <property type="match status" value="1"/>
</dbReference>
<dbReference type="PANTHER" id="PTHR43861:SF1">
    <property type="entry name" value="TRANS-ACONITATE 2-METHYLTRANSFERASE"/>
    <property type="match status" value="1"/>
</dbReference>
<dbReference type="PANTHER" id="PTHR43861">
    <property type="entry name" value="TRANS-ACONITATE 2-METHYLTRANSFERASE-RELATED"/>
    <property type="match status" value="1"/>
</dbReference>
<dbReference type="Pfam" id="PF13649">
    <property type="entry name" value="Methyltransf_25"/>
    <property type="match status" value="1"/>
</dbReference>
<dbReference type="SUPFAM" id="SSF53335">
    <property type="entry name" value="S-adenosyl-L-methionine-dependent methyltransferases"/>
    <property type="match status" value="1"/>
</dbReference>
<accession>Q216J6</accession>
<feature type="chain" id="PRO_1000056577" description="Trans-aconitate 2-methyltransferase">
    <location>
        <begin position="1"/>
        <end position="256"/>
    </location>
</feature>
<proteinExistence type="inferred from homology"/>
<gene>
    <name evidence="1" type="primary">tam</name>
    <name type="ordered locus">RPC_2136</name>
</gene>
<reference key="1">
    <citation type="submission" date="2006-03" db="EMBL/GenBank/DDBJ databases">
        <title>Complete sequence of Rhodopseudomonas palustris BisB18.</title>
        <authorList>
            <consortium name="US DOE Joint Genome Institute"/>
            <person name="Copeland A."/>
            <person name="Lucas S."/>
            <person name="Lapidus A."/>
            <person name="Barry K."/>
            <person name="Detter J.C."/>
            <person name="Glavina del Rio T."/>
            <person name="Hammon N."/>
            <person name="Israni S."/>
            <person name="Dalin E."/>
            <person name="Tice H."/>
            <person name="Pitluck S."/>
            <person name="Chain P."/>
            <person name="Malfatti S."/>
            <person name="Shin M."/>
            <person name="Vergez L."/>
            <person name="Schmutz J."/>
            <person name="Larimer F."/>
            <person name="Land M."/>
            <person name="Hauser L."/>
            <person name="Pelletier D.A."/>
            <person name="Kyrpides N."/>
            <person name="Anderson I."/>
            <person name="Oda Y."/>
            <person name="Harwood C.S."/>
            <person name="Richardson P."/>
        </authorList>
    </citation>
    <scope>NUCLEOTIDE SEQUENCE [LARGE SCALE GENOMIC DNA]</scope>
    <source>
        <strain>BisB18</strain>
    </source>
</reference>
<evidence type="ECO:0000255" key="1">
    <source>
        <dbReference type="HAMAP-Rule" id="MF_00560"/>
    </source>
</evidence>
<organism>
    <name type="scientific">Rhodopseudomonas palustris (strain BisB18)</name>
    <dbReference type="NCBI Taxonomy" id="316056"/>
    <lineage>
        <taxon>Bacteria</taxon>
        <taxon>Pseudomonadati</taxon>
        <taxon>Pseudomonadota</taxon>
        <taxon>Alphaproteobacteria</taxon>
        <taxon>Hyphomicrobiales</taxon>
        <taxon>Nitrobacteraceae</taxon>
        <taxon>Rhodopseudomonas</taxon>
    </lineage>
</organism>
<comment type="function">
    <text evidence="1">Catalyzes the S-adenosylmethionine monomethyl esterification of trans-aconitate.</text>
</comment>
<comment type="catalytic activity">
    <reaction evidence="1">
        <text>trans-aconitate + S-adenosyl-L-methionine = (E)-3-(methoxycarbonyl)pent-2-enedioate + S-adenosyl-L-homocysteine</text>
        <dbReference type="Rhea" id="RHEA:14969"/>
        <dbReference type="ChEBI" id="CHEBI:15708"/>
        <dbReference type="ChEBI" id="CHEBI:57470"/>
        <dbReference type="ChEBI" id="CHEBI:57856"/>
        <dbReference type="ChEBI" id="CHEBI:59789"/>
        <dbReference type="EC" id="2.1.1.144"/>
    </reaction>
</comment>
<comment type="subcellular location">
    <subcellularLocation>
        <location evidence="1">Cytoplasm</location>
    </subcellularLocation>
</comment>
<comment type="similarity">
    <text evidence="1">Belongs to the methyltransferase superfamily. Tam family.</text>
</comment>
<protein>
    <recommendedName>
        <fullName evidence="1">Trans-aconitate 2-methyltransferase</fullName>
        <ecNumber evidence="1">2.1.1.144</ecNumber>
    </recommendedName>
</protein>
<name>TAM_RHOPB</name>
<sequence length="256" mass="29006">MADWDAEQYLKFEDERTRPARDLLAQIPLDDPRRVADIGCGPGNSTELLVRRWPQARVTGVDTSADMLRQARERLPGHNFIEANIAHWAPPVGTDVVFANAVFQWVPNHLKHMQRLVGALEPGGVLAVQMPDNLDEPSHIMMREVAFQEPWRHQLAEAAQLRDNLPKPGAYYDALRPLCSRLEIWHTVYNHVLDDAMAIVEWVKGTGLRPFIDPLELPERKAYLAAYTARIAAAYPPQADGKVLLRFPRLFVVAIK</sequence>
<keyword id="KW-0963">Cytoplasm</keyword>
<keyword id="KW-0489">Methyltransferase</keyword>
<keyword id="KW-0949">S-adenosyl-L-methionine</keyword>
<keyword id="KW-0808">Transferase</keyword>